<keyword id="KW-0067">ATP-binding</keyword>
<keyword id="KW-0997">Cell inner membrane</keyword>
<keyword id="KW-1003">Cell membrane</keyword>
<keyword id="KW-0406">Ion transport</keyword>
<keyword id="KW-0472">Membrane</keyword>
<keyword id="KW-0547">Nucleotide-binding</keyword>
<keyword id="KW-1185">Reference proteome</keyword>
<keyword id="KW-1278">Translocase</keyword>
<keyword id="KW-0813">Transport</keyword>
<keyword id="KW-0862">Zinc</keyword>
<keyword id="KW-0864">Zinc transport</keyword>
<gene>
    <name evidence="1" type="primary">znuC</name>
    <name type="ordered locus">YPO2060</name>
    <name type="ordered locus">y2250</name>
    <name type="ordered locus">YP_1903</name>
</gene>
<protein>
    <recommendedName>
        <fullName evidence="1">Zinc import ATP-binding protein ZnuC</fullName>
        <ecNumber evidence="1">7.2.2.20</ecNumber>
    </recommendedName>
</protein>
<proteinExistence type="inferred from homology"/>
<evidence type="ECO:0000255" key="1">
    <source>
        <dbReference type="HAMAP-Rule" id="MF_01725"/>
    </source>
</evidence>
<comment type="function">
    <text evidence="1">Part of the ABC transporter complex ZnuABC involved in zinc import. Responsible for energy coupling to the transport system.</text>
</comment>
<comment type="catalytic activity">
    <reaction evidence="1">
        <text>Zn(2+)(out) + ATP(in) + H2O(in) = Zn(2+)(in) + ADP(in) + phosphate(in) + H(+)(in)</text>
        <dbReference type="Rhea" id="RHEA:29795"/>
        <dbReference type="ChEBI" id="CHEBI:15377"/>
        <dbReference type="ChEBI" id="CHEBI:15378"/>
        <dbReference type="ChEBI" id="CHEBI:29105"/>
        <dbReference type="ChEBI" id="CHEBI:30616"/>
        <dbReference type="ChEBI" id="CHEBI:43474"/>
        <dbReference type="ChEBI" id="CHEBI:456216"/>
        <dbReference type="EC" id="7.2.2.20"/>
    </reaction>
</comment>
<comment type="subunit">
    <text evidence="1">The complex is composed of two ATP-binding proteins (ZnuC), two transmembrane proteins (ZnuB) and a solute-binding protein (ZnuA).</text>
</comment>
<comment type="subcellular location">
    <subcellularLocation>
        <location evidence="1">Cell inner membrane</location>
        <topology evidence="1">Peripheral membrane protein</topology>
    </subcellularLocation>
</comment>
<comment type="similarity">
    <text evidence="1">Belongs to the ABC transporter superfamily. Zinc importer (TC 3.A.1.15.5) family.</text>
</comment>
<name>ZNUC_YERPE</name>
<dbReference type="EC" id="7.2.2.20" evidence="1"/>
<dbReference type="EMBL" id="AL590842">
    <property type="protein sequence ID" value="CAL20695.1"/>
    <property type="molecule type" value="Genomic_DNA"/>
</dbReference>
<dbReference type="EMBL" id="AE009952">
    <property type="protein sequence ID" value="AAM85810.1"/>
    <property type="molecule type" value="Genomic_DNA"/>
</dbReference>
<dbReference type="EMBL" id="AE017042">
    <property type="protein sequence ID" value="AAS62121.1"/>
    <property type="molecule type" value="Genomic_DNA"/>
</dbReference>
<dbReference type="PIR" id="AD0251">
    <property type="entry name" value="AD0251"/>
</dbReference>
<dbReference type="SMR" id="Q7CIC2"/>
<dbReference type="IntAct" id="Q7CIC2">
    <property type="interactions" value="2"/>
</dbReference>
<dbReference type="STRING" id="214092.YPO2060"/>
<dbReference type="PaxDb" id="214092-YPO2060"/>
<dbReference type="EnsemblBacteria" id="AAS62121">
    <property type="protein sequence ID" value="AAS62121"/>
    <property type="gene ID" value="YP_1903"/>
</dbReference>
<dbReference type="KEGG" id="ype:YPO2060"/>
<dbReference type="KEGG" id="ypk:y2250"/>
<dbReference type="KEGG" id="ypm:YP_1903"/>
<dbReference type="eggNOG" id="COG1121">
    <property type="taxonomic scope" value="Bacteria"/>
</dbReference>
<dbReference type="HOGENOM" id="CLU_000604_1_11_6"/>
<dbReference type="OMA" id="GHDHVHP"/>
<dbReference type="PHI-base" id="PHI:11909"/>
<dbReference type="Proteomes" id="UP000000815">
    <property type="component" value="Chromosome"/>
</dbReference>
<dbReference type="Proteomes" id="UP000001019">
    <property type="component" value="Chromosome"/>
</dbReference>
<dbReference type="Proteomes" id="UP000002490">
    <property type="component" value="Chromosome"/>
</dbReference>
<dbReference type="GO" id="GO:0043190">
    <property type="term" value="C:ATP-binding cassette (ABC) transporter complex"/>
    <property type="evidence" value="ECO:0000318"/>
    <property type="project" value="GO_Central"/>
</dbReference>
<dbReference type="GO" id="GO:0015633">
    <property type="term" value="F:ABC-type zinc transporter activity"/>
    <property type="evidence" value="ECO:0007669"/>
    <property type="project" value="UniProtKB-EC"/>
</dbReference>
<dbReference type="GO" id="GO:0005524">
    <property type="term" value="F:ATP binding"/>
    <property type="evidence" value="ECO:0007669"/>
    <property type="project" value="UniProtKB-KW"/>
</dbReference>
<dbReference type="GO" id="GO:0016887">
    <property type="term" value="F:ATP hydrolysis activity"/>
    <property type="evidence" value="ECO:0007669"/>
    <property type="project" value="InterPro"/>
</dbReference>
<dbReference type="GO" id="GO:0042626">
    <property type="term" value="F:ATPase-coupled transmembrane transporter activity"/>
    <property type="evidence" value="ECO:0000318"/>
    <property type="project" value="GO_Central"/>
</dbReference>
<dbReference type="GO" id="GO:0010043">
    <property type="term" value="P:response to zinc ion"/>
    <property type="evidence" value="ECO:0000318"/>
    <property type="project" value="GO_Central"/>
</dbReference>
<dbReference type="CDD" id="cd03235">
    <property type="entry name" value="ABC_Metallic_Cations"/>
    <property type="match status" value="1"/>
</dbReference>
<dbReference type="FunFam" id="3.40.50.300:FF:000392">
    <property type="entry name" value="Zinc import ATP-binding protein ZnuC"/>
    <property type="match status" value="1"/>
</dbReference>
<dbReference type="Gene3D" id="3.40.50.300">
    <property type="entry name" value="P-loop containing nucleotide triphosphate hydrolases"/>
    <property type="match status" value="1"/>
</dbReference>
<dbReference type="InterPro" id="IPR003593">
    <property type="entry name" value="AAA+_ATPase"/>
</dbReference>
<dbReference type="InterPro" id="IPR003439">
    <property type="entry name" value="ABC_transporter-like_ATP-bd"/>
</dbReference>
<dbReference type="InterPro" id="IPR050153">
    <property type="entry name" value="Metal_Ion_Import_ABC"/>
</dbReference>
<dbReference type="InterPro" id="IPR027417">
    <property type="entry name" value="P-loop_NTPase"/>
</dbReference>
<dbReference type="NCBIfam" id="NF007090">
    <property type="entry name" value="PRK09544.1"/>
    <property type="match status" value="1"/>
</dbReference>
<dbReference type="PANTHER" id="PTHR42734">
    <property type="entry name" value="METAL TRANSPORT SYSTEM ATP-BINDING PROTEIN TM_0124-RELATED"/>
    <property type="match status" value="1"/>
</dbReference>
<dbReference type="PANTHER" id="PTHR42734:SF9">
    <property type="entry name" value="ZINC IMPORT ATP-BINDING PROTEIN ZNUC"/>
    <property type="match status" value="1"/>
</dbReference>
<dbReference type="Pfam" id="PF00005">
    <property type="entry name" value="ABC_tran"/>
    <property type="match status" value="1"/>
</dbReference>
<dbReference type="SMART" id="SM00382">
    <property type="entry name" value="AAA"/>
    <property type="match status" value="1"/>
</dbReference>
<dbReference type="SUPFAM" id="SSF52540">
    <property type="entry name" value="P-loop containing nucleoside triphosphate hydrolases"/>
    <property type="match status" value="1"/>
</dbReference>
<dbReference type="PROSITE" id="PS50893">
    <property type="entry name" value="ABC_TRANSPORTER_2"/>
    <property type="match status" value="1"/>
</dbReference>
<dbReference type="PROSITE" id="PS51298">
    <property type="entry name" value="ZNUC"/>
    <property type="match status" value="1"/>
</dbReference>
<reference key="1">
    <citation type="journal article" date="2001" name="Nature">
        <title>Genome sequence of Yersinia pestis, the causative agent of plague.</title>
        <authorList>
            <person name="Parkhill J."/>
            <person name="Wren B.W."/>
            <person name="Thomson N.R."/>
            <person name="Titball R.W."/>
            <person name="Holden M.T.G."/>
            <person name="Prentice M.B."/>
            <person name="Sebaihia M."/>
            <person name="James K.D."/>
            <person name="Churcher C.M."/>
            <person name="Mungall K.L."/>
            <person name="Baker S."/>
            <person name="Basham D."/>
            <person name="Bentley S.D."/>
            <person name="Brooks K."/>
            <person name="Cerdeno-Tarraga A.-M."/>
            <person name="Chillingworth T."/>
            <person name="Cronin A."/>
            <person name="Davies R.M."/>
            <person name="Davis P."/>
            <person name="Dougan G."/>
            <person name="Feltwell T."/>
            <person name="Hamlin N."/>
            <person name="Holroyd S."/>
            <person name="Jagels K."/>
            <person name="Karlyshev A.V."/>
            <person name="Leather S."/>
            <person name="Moule S."/>
            <person name="Oyston P.C.F."/>
            <person name="Quail M.A."/>
            <person name="Rutherford K.M."/>
            <person name="Simmonds M."/>
            <person name="Skelton J."/>
            <person name="Stevens K."/>
            <person name="Whitehead S."/>
            <person name="Barrell B.G."/>
        </authorList>
    </citation>
    <scope>NUCLEOTIDE SEQUENCE [LARGE SCALE GENOMIC DNA]</scope>
    <source>
        <strain>CO-92 / Biovar Orientalis</strain>
    </source>
</reference>
<reference key="2">
    <citation type="journal article" date="2002" name="J. Bacteriol.">
        <title>Genome sequence of Yersinia pestis KIM.</title>
        <authorList>
            <person name="Deng W."/>
            <person name="Burland V."/>
            <person name="Plunkett G. III"/>
            <person name="Boutin A."/>
            <person name="Mayhew G.F."/>
            <person name="Liss P."/>
            <person name="Perna N.T."/>
            <person name="Rose D.J."/>
            <person name="Mau B."/>
            <person name="Zhou S."/>
            <person name="Schwartz D.C."/>
            <person name="Fetherston J.D."/>
            <person name="Lindler L.E."/>
            <person name="Brubaker R.R."/>
            <person name="Plano G.V."/>
            <person name="Straley S.C."/>
            <person name="McDonough K.A."/>
            <person name="Nilles M.L."/>
            <person name="Matson J.S."/>
            <person name="Blattner F.R."/>
            <person name="Perry R.D."/>
        </authorList>
    </citation>
    <scope>NUCLEOTIDE SEQUENCE [LARGE SCALE GENOMIC DNA]</scope>
    <source>
        <strain>KIM10+ / Biovar Mediaevalis</strain>
    </source>
</reference>
<reference key="3">
    <citation type="journal article" date="2004" name="DNA Res.">
        <title>Complete genome sequence of Yersinia pestis strain 91001, an isolate avirulent to humans.</title>
        <authorList>
            <person name="Song Y."/>
            <person name="Tong Z."/>
            <person name="Wang J."/>
            <person name="Wang L."/>
            <person name="Guo Z."/>
            <person name="Han Y."/>
            <person name="Zhang J."/>
            <person name="Pei D."/>
            <person name="Zhou D."/>
            <person name="Qin H."/>
            <person name="Pang X."/>
            <person name="Han Y."/>
            <person name="Zhai J."/>
            <person name="Li M."/>
            <person name="Cui B."/>
            <person name="Qi Z."/>
            <person name="Jin L."/>
            <person name="Dai R."/>
            <person name="Chen F."/>
            <person name="Li S."/>
            <person name="Ye C."/>
            <person name="Du Z."/>
            <person name="Lin W."/>
            <person name="Wang J."/>
            <person name="Yu J."/>
            <person name="Yang H."/>
            <person name="Wang J."/>
            <person name="Huang P."/>
            <person name="Yang R."/>
        </authorList>
    </citation>
    <scope>NUCLEOTIDE SEQUENCE [LARGE SCALE GENOMIC DNA]</scope>
    <source>
        <strain>91001 / Biovar Mediaevalis</strain>
    </source>
</reference>
<sequence length="253" mass="27620">MMPILVTLNKISVTFGSRRVLNDISLSLRPGKILTLLGPNGAGKSTLVRVVLGLIPPSSGSLVREPGLRIGYVPQKLHLDATLPLTVSRFMRLKPGVKKADILPALTRVQAAHLLDQPMQKLSGGENQRVLLARALLNRPQLLVLDEPTQGVDVNGQLALYDLIEQLRKELGCAVLMVSHDLHLVMAKTDEVLCLNQHICCSGAPEVVSTHPEFIAMFGNRGAEQLAVYRHNHNHRHDLHGKIILKNSGSRGA</sequence>
<accession>Q7CIC2</accession>
<accession>Q74U47</accession>
<feature type="chain" id="PRO_0000281569" description="Zinc import ATP-binding protein ZnuC">
    <location>
        <begin position="1"/>
        <end position="253"/>
    </location>
</feature>
<feature type="domain" description="ABC transporter" evidence="1">
    <location>
        <begin position="6"/>
        <end position="227"/>
    </location>
</feature>
<feature type="binding site" evidence="1">
    <location>
        <begin position="38"/>
        <end position="45"/>
    </location>
    <ligand>
        <name>ATP</name>
        <dbReference type="ChEBI" id="CHEBI:30616"/>
    </ligand>
</feature>
<organism>
    <name type="scientific">Yersinia pestis</name>
    <dbReference type="NCBI Taxonomy" id="632"/>
    <lineage>
        <taxon>Bacteria</taxon>
        <taxon>Pseudomonadati</taxon>
        <taxon>Pseudomonadota</taxon>
        <taxon>Gammaproteobacteria</taxon>
        <taxon>Enterobacterales</taxon>
        <taxon>Yersiniaceae</taxon>
        <taxon>Yersinia</taxon>
    </lineage>
</organism>